<feature type="chain" id="PRO_0000107144" description="Uncharacterized protein MJ1020">
    <location>
        <begin position="1"/>
        <end position="259"/>
    </location>
</feature>
<feature type="domain" description="HD" evidence="1">
    <location>
        <begin position="51"/>
        <end position="173"/>
    </location>
</feature>
<organism>
    <name type="scientific">Methanocaldococcus jannaschii (strain ATCC 43067 / DSM 2661 / JAL-1 / JCM 10045 / NBRC 100440)</name>
    <name type="common">Methanococcus jannaschii</name>
    <dbReference type="NCBI Taxonomy" id="243232"/>
    <lineage>
        <taxon>Archaea</taxon>
        <taxon>Methanobacteriati</taxon>
        <taxon>Methanobacteriota</taxon>
        <taxon>Methanomada group</taxon>
        <taxon>Methanococci</taxon>
        <taxon>Methanococcales</taxon>
        <taxon>Methanocaldococcaceae</taxon>
        <taxon>Methanocaldococcus</taxon>
    </lineage>
</organism>
<sequence>MGRDMDFEELNSLQGIPKMIYDELIKNKKVNTFLKMSNIMAVGRLGYNDHGKTHAKIVANNAIKMLKILYKKGIEPSFVKDCKGSFEDSLVITLLGAYLHDIGNSVHRDIHHLHSAYLALDIVENILKKYYKEEKAYQMTTEVLHAIYSHSEGIMGLTIEAGVIAVADGTDMTKGRSRIPICKKCYDIHSVSAASIERVEIKEGDEKPIQIEVILSNEAGIFQIQEVLGEKIKWSGIKNYVSVYARVEKEKPVFEEITI</sequence>
<evidence type="ECO:0000255" key="1">
    <source>
        <dbReference type="PROSITE-ProRule" id="PRU01175"/>
    </source>
</evidence>
<keyword id="KW-1185">Reference proteome</keyword>
<protein>
    <recommendedName>
        <fullName>Uncharacterized protein MJ1020</fullName>
    </recommendedName>
</protein>
<reference key="1">
    <citation type="journal article" date="1996" name="Science">
        <title>Complete genome sequence of the methanogenic archaeon, Methanococcus jannaschii.</title>
        <authorList>
            <person name="Bult C.J."/>
            <person name="White O."/>
            <person name="Olsen G.J."/>
            <person name="Zhou L."/>
            <person name="Fleischmann R.D."/>
            <person name="Sutton G.G."/>
            <person name="Blake J.A."/>
            <person name="FitzGerald L.M."/>
            <person name="Clayton R.A."/>
            <person name="Gocayne J.D."/>
            <person name="Kerlavage A.R."/>
            <person name="Dougherty B.A."/>
            <person name="Tomb J.-F."/>
            <person name="Adams M.D."/>
            <person name="Reich C.I."/>
            <person name="Overbeek R."/>
            <person name="Kirkness E.F."/>
            <person name="Weinstock K.G."/>
            <person name="Merrick J.M."/>
            <person name="Glodek A."/>
            <person name="Scott J.L."/>
            <person name="Geoghagen N.S.M."/>
            <person name="Weidman J.F."/>
            <person name="Fuhrmann J.L."/>
            <person name="Nguyen D."/>
            <person name="Utterback T.R."/>
            <person name="Kelley J.M."/>
            <person name="Peterson J.D."/>
            <person name="Sadow P.W."/>
            <person name="Hanna M.C."/>
            <person name="Cotton M.D."/>
            <person name="Roberts K.M."/>
            <person name="Hurst M.A."/>
            <person name="Kaine B.P."/>
            <person name="Borodovsky M."/>
            <person name="Klenk H.-P."/>
            <person name="Fraser C.M."/>
            <person name="Smith H.O."/>
            <person name="Woese C.R."/>
            <person name="Venter J.C."/>
        </authorList>
    </citation>
    <scope>NUCLEOTIDE SEQUENCE [LARGE SCALE GENOMIC DNA]</scope>
    <source>
        <strain>ATCC 43067 / DSM 2661 / JAL-1 / JCM 10045 / NBRC 100440</strain>
    </source>
</reference>
<gene>
    <name type="ordered locus">MJ1020</name>
</gene>
<proteinExistence type="predicted"/>
<accession>Q58426</accession>
<name>Y1020_METJA</name>
<dbReference type="EMBL" id="L77117">
    <property type="protein sequence ID" value="AAB99024.1"/>
    <property type="molecule type" value="Genomic_DNA"/>
</dbReference>
<dbReference type="PIR" id="C64427">
    <property type="entry name" value="C64427"/>
</dbReference>
<dbReference type="STRING" id="243232.MJ_1020"/>
<dbReference type="PaxDb" id="243232-MJ_1020"/>
<dbReference type="DNASU" id="1451917"/>
<dbReference type="EnsemblBacteria" id="AAB99024">
    <property type="protein sequence ID" value="AAB99024"/>
    <property type="gene ID" value="MJ_1020"/>
</dbReference>
<dbReference type="KEGG" id="mja:MJ_1020"/>
<dbReference type="eggNOG" id="arCOG04230">
    <property type="taxonomic scope" value="Archaea"/>
</dbReference>
<dbReference type="HOGENOM" id="CLU_068640_0_0_2"/>
<dbReference type="InParanoid" id="Q58426"/>
<dbReference type="PhylomeDB" id="Q58426"/>
<dbReference type="Proteomes" id="UP000000805">
    <property type="component" value="Chromosome"/>
</dbReference>
<dbReference type="CDD" id="cd00077">
    <property type="entry name" value="HDc"/>
    <property type="match status" value="1"/>
</dbReference>
<dbReference type="Gene3D" id="1.10.3210.10">
    <property type="entry name" value="Hypothetical protein af1432"/>
    <property type="match status" value="1"/>
</dbReference>
<dbReference type="InterPro" id="IPR003607">
    <property type="entry name" value="HD/PDEase_dom"/>
</dbReference>
<dbReference type="InterPro" id="IPR006674">
    <property type="entry name" value="HD_domain"/>
</dbReference>
<dbReference type="InterPro" id="IPR039967">
    <property type="entry name" value="MJ1020-like"/>
</dbReference>
<dbReference type="PANTHER" id="PTHR40517">
    <property type="entry name" value="METAL-DEPENDENT PHOSPHOHYDROLASE, HD SUPERFAMILY-RELATED"/>
    <property type="match status" value="1"/>
</dbReference>
<dbReference type="PANTHER" id="PTHR40517:SF1">
    <property type="entry name" value="METAL-DEPENDENT PHOSPHOHYDROLASE, HD SUPERFAMILY-RELATED"/>
    <property type="match status" value="1"/>
</dbReference>
<dbReference type="Pfam" id="PF01966">
    <property type="entry name" value="HD"/>
    <property type="match status" value="1"/>
</dbReference>
<dbReference type="SMART" id="SM00471">
    <property type="entry name" value="HDc"/>
    <property type="match status" value="1"/>
</dbReference>
<dbReference type="SUPFAM" id="SSF109604">
    <property type="entry name" value="HD-domain/PDEase-like"/>
    <property type="match status" value="1"/>
</dbReference>
<dbReference type="PROSITE" id="PS51831">
    <property type="entry name" value="HD"/>
    <property type="match status" value="1"/>
</dbReference>